<keyword id="KW-0227">DNA damage</keyword>
<keyword id="KW-0233">DNA recombination</keyword>
<keyword id="KW-0234">DNA repair</keyword>
<keyword id="KW-0479">Metal-binding</keyword>
<keyword id="KW-0862">Zinc</keyword>
<keyword id="KW-0863">Zinc-finger</keyword>
<comment type="function">
    <text evidence="1">May play a role in DNA repair. It seems to be involved in an RecBC-independent recombinational process of DNA repair. It may act with RecF and RecO.</text>
</comment>
<comment type="similarity">
    <text evidence="1">Belongs to the RecR family.</text>
</comment>
<dbReference type="EMBL" id="AP009240">
    <property type="protein sequence ID" value="BAG76021.1"/>
    <property type="molecule type" value="Genomic_DNA"/>
</dbReference>
<dbReference type="RefSeq" id="WP_001195025.1">
    <property type="nucleotide sequence ID" value="NC_011415.1"/>
</dbReference>
<dbReference type="SMR" id="B6I0C4"/>
<dbReference type="GeneID" id="93776978"/>
<dbReference type="KEGG" id="ecy:ECSE_0497"/>
<dbReference type="HOGENOM" id="CLU_060739_1_2_6"/>
<dbReference type="Proteomes" id="UP000008199">
    <property type="component" value="Chromosome"/>
</dbReference>
<dbReference type="GO" id="GO:0003677">
    <property type="term" value="F:DNA binding"/>
    <property type="evidence" value="ECO:0007669"/>
    <property type="project" value="UniProtKB-UniRule"/>
</dbReference>
<dbReference type="GO" id="GO:0008270">
    <property type="term" value="F:zinc ion binding"/>
    <property type="evidence" value="ECO:0007669"/>
    <property type="project" value="UniProtKB-KW"/>
</dbReference>
<dbReference type="GO" id="GO:0006310">
    <property type="term" value="P:DNA recombination"/>
    <property type="evidence" value="ECO:0007669"/>
    <property type="project" value="UniProtKB-UniRule"/>
</dbReference>
<dbReference type="GO" id="GO:0006281">
    <property type="term" value="P:DNA repair"/>
    <property type="evidence" value="ECO:0007669"/>
    <property type="project" value="UniProtKB-UniRule"/>
</dbReference>
<dbReference type="CDD" id="cd01025">
    <property type="entry name" value="TOPRIM_recR"/>
    <property type="match status" value="1"/>
</dbReference>
<dbReference type="FunFam" id="1.10.8.420:FF:000001">
    <property type="entry name" value="Recombination protein RecR"/>
    <property type="match status" value="1"/>
</dbReference>
<dbReference type="FunFam" id="3.40.1360.10:FF:000001">
    <property type="entry name" value="Recombination protein RecR"/>
    <property type="match status" value="1"/>
</dbReference>
<dbReference type="Gene3D" id="3.40.1360.10">
    <property type="match status" value="1"/>
</dbReference>
<dbReference type="Gene3D" id="6.10.250.240">
    <property type="match status" value="1"/>
</dbReference>
<dbReference type="Gene3D" id="1.10.8.420">
    <property type="entry name" value="RecR Domain 1"/>
    <property type="match status" value="1"/>
</dbReference>
<dbReference type="HAMAP" id="MF_00017">
    <property type="entry name" value="RecR"/>
    <property type="match status" value="1"/>
</dbReference>
<dbReference type="InterPro" id="IPR000093">
    <property type="entry name" value="DNA_Rcmb_RecR"/>
</dbReference>
<dbReference type="InterPro" id="IPR023627">
    <property type="entry name" value="Rcmb_RecR"/>
</dbReference>
<dbReference type="InterPro" id="IPR015967">
    <property type="entry name" value="Rcmb_RecR_Znf"/>
</dbReference>
<dbReference type="InterPro" id="IPR006171">
    <property type="entry name" value="TOPRIM_dom"/>
</dbReference>
<dbReference type="InterPro" id="IPR034137">
    <property type="entry name" value="TOPRIM_RecR"/>
</dbReference>
<dbReference type="NCBIfam" id="TIGR00615">
    <property type="entry name" value="recR"/>
    <property type="match status" value="1"/>
</dbReference>
<dbReference type="PANTHER" id="PTHR30446">
    <property type="entry name" value="RECOMBINATION PROTEIN RECR"/>
    <property type="match status" value="1"/>
</dbReference>
<dbReference type="PANTHER" id="PTHR30446:SF0">
    <property type="entry name" value="RECOMBINATION PROTEIN RECR"/>
    <property type="match status" value="1"/>
</dbReference>
<dbReference type="Pfam" id="PF21175">
    <property type="entry name" value="RecR_C"/>
    <property type="match status" value="1"/>
</dbReference>
<dbReference type="Pfam" id="PF21176">
    <property type="entry name" value="RecR_HhH"/>
    <property type="match status" value="1"/>
</dbReference>
<dbReference type="Pfam" id="PF02132">
    <property type="entry name" value="RecR_ZnF"/>
    <property type="match status" value="1"/>
</dbReference>
<dbReference type="Pfam" id="PF13662">
    <property type="entry name" value="Toprim_4"/>
    <property type="match status" value="1"/>
</dbReference>
<dbReference type="SMART" id="SM00493">
    <property type="entry name" value="TOPRIM"/>
    <property type="match status" value="1"/>
</dbReference>
<dbReference type="SUPFAM" id="SSF111304">
    <property type="entry name" value="Recombination protein RecR"/>
    <property type="match status" value="1"/>
</dbReference>
<dbReference type="PROSITE" id="PS01300">
    <property type="entry name" value="RECR"/>
    <property type="match status" value="1"/>
</dbReference>
<dbReference type="PROSITE" id="PS50880">
    <property type="entry name" value="TOPRIM"/>
    <property type="match status" value="1"/>
</dbReference>
<accession>B6I0C4</accession>
<sequence>MQTSPLLTQLMEALRCLPGVGPKSAQRMAFTLLQRDRSGGMRLAQALTRAMSEIGHCADCRTFTEQEVCNICSNPRRQENGQICVVESPADIYAIEQTGQFSGRYFVLMGHLSPLDGIGPDDIGLDRLEQRLAEEKITEVILATNPTVEGEATANYIAELCAQYDVEASRIAHGVPVGGELEMVDGTTLSHSLAGRHKIRF</sequence>
<protein>
    <recommendedName>
        <fullName evidence="1">Recombination protein RecR</fullName>
    </recommendedName>
</protein>
<feature type="chain" id="PRO_1000089727" description="Recombination protein RecR">
    <location>
        <begin position="1"/>
        <end position="201"/>
    </location>
</feature>
<feature type="domain" description="Toprim" evidence="1">
    <location>
        <begin position="81"/>
        <end position="176"/>
    </location>
</feature>
<feature type="zinc finger region" description="C4-type" evidence="1">
    <location>
        <begin position="57"/>
        <end position="72"/>
    </location>
</feature>
<evidence type="ECO:0000255" key="1">
    <source>
        <dbReference type="HAMAP-Rule" id="MF_00017"/>
    </source>
</evidence>
<gene>
    <name evidence="1" type="primary">recR</name>
    <name type="ordered locus">ECSE_0497</name>
</gene>
<reference key="1">
    <citation type="journal article" date="2008" name="DNA Res.">
        <title>Complete genome sequence and comparative analysis of the wild-type commensal Escherichia coli strain SE11 isolated from a healthy adult.</title>
        <authorList>
            <person name="Oshima K."/>
            <person name="Toh H."/>
            <person name="Ogura Y."/>
            <person name="Sasamoto H."/>
            <person name="Morita H."/>
            <person name="Park S.-H."/>
            <person name="Ooka T."/>
            <person name="Iyoda S."/>
            <person name="Taylor T.D."/>
            <person name="Hayashi T."/>
            <person name="Itoh K."/>
            <person name="Hattori M."/>
        </authorList>
    </citation>
    <scope>NUCLEOTIDE SEQUENCE [LARGE SCALE GENOMIC DNA]</scope>
    <source>
        <strain>SE11</strain>
    </source>
</reference>
<proteinExistence type="inferred from homology"/>
<name>RECR_ECOSE</name>
<organism>
    <name type="scientific">Escherichia coli (strain SE11)</name>
    <dbReference type="NCBI Taxonomy" id="409438"/>
    <lineage>
        <taxon>Bacteria</taxon>
        <taxon>Pseudomonadati</taxon>
        <taxon>Pseudomonadota</taxon>
        <taxon>Gammaproteobacteria</taxon>
        <taxon>Enterobacterales</taxon>
        <taxon>Enterobacteriaceae</taxon>
        <taxon>Escherichia</taxon>
    </lineage>
</organism>